<sequence>MGSQPPLGSPLSREEGEAPPPAPASEGRRRSRRVRLRGSCRHRPSFLGCRELAASAPARPAPASSEIMASAAKEFKMDNFSPKAGTSKLQQTVPADASPDSKCPICLDRFDNVSYLDRCLHKFCFRCVQEWSKNKAECPLCKQPFDSIFHSVRAEDDFKEYVLRPSYNGSFVTPDRRFRYRTTLTRERNASVYSPSGPVNRRTTTPPDSGVLFEGLGISTRPRDVEIPQFMRQIAVRRPTTADERSLRKIQEQDIINFRRTLYRAGARVRNIEDGGRYRDISAEFFRRNPACLHRLVPWLKRELTVLFGAHGSLVNIVQHIIMSNVTRYDLESQAFVSDLRPFLLNRTEHFIHEFISFARSPFNMAAFDQHANYDCPAPSYEEGSHSDSSVITISPDEAETQELDINVATVSQAPWDDETPGPSYSSSEQVHVTMSSLLNTSDSSDEELVTGGATSQIQGVQTNDDLNNDSDDSSDNCVIVGFVKPLAERTPELVELSSDSEDLGSYEKMETVKTQEQEQSYSSGDSDVSRCSSPHSVLGKDEQINKGHCDSSTRIKSKKEEKRSTSLSSPRNLNSSVRGDRVYSPYNHRHRKRGRSRSSDSRSQSRSGHDQKNHRKHHGKKRMKSKRSRSRESSRPRGRRDKKRSRTRDSSWSRRSQTLSLSSESTSRSRSRSSDHGKRRSRSRNRDRYYLRNNYGSRYKWEYTYYSRNKDRDGYESSYRRRTLSRAHYSRQSSSPEFRVQSFSERTNARKKNNHSERKYYYYERHRSRSLSSNRSRTASTGTDRVRNEKPGGKRKYKTRHLEGTNEVAQPSREFASKAKDSHYQKSSSKLDGNYKNESDTFSDSRSSDRETKHKRRKRKTRSLSVEIVYEGKATDTTKHHKKKKKKHKKKHKKHHGDNASRSPVVITIDSDSDKDSEVKEDTECDNSGPQDPLQNEFLAPSLEPFETKDVVTIEAEFGVLDKECDIATLSNNLNNANKTVDNIPPLAASVEQTLDVREESTFVSDLENQPSNIVSLQTEPSRQLPSPRTSLMSVCLGRDCDMS</sequence>
<dbReference type="EC" id="2.3.2.27"/>
<dbReference type="EMBL" id="AF098300">
    <property type="protein sequence ID" value="AAD23379.1"/>
    <property type="molecule type" value="mRNA"/>
</dbReference>
<dbReference type="EMBL" id="AB045732">
    <property type="protein sequence ID" value="BAB03714.1"/>
    <property type="molecule type" value="mRNA"/>
</dbReference>
<dbReference type="EMBL" id="AB045733">
    <property type="protein sequence ID" value="BAB03715.1"/>
    <property type="molecule type" value="mRNA"/>
</dbReference>
<dbReference type="EMBL" id="AL353671">
    <property type="status" value="NOT_ANNOTATED_CDS"/>
    <property type="molecule type" value="Genomic_DNA"/>
</dbReference>
<dbReference type="EMBL" id="BC060884">
    <property type="protein sequence ID" value="AAH60884.1"/>
    <property type="molecule type" value="mRNA"/>
</dbReference>
<dbReference type="EMBL" id="U82939">
    <property type="protein sequence ID" value="AAC98530.1"/>
    <property type="status" value="ALT_INIT"/>
    <property type="molecule type" value="mRNA"/>
</dbReference>
<dbReference type="CCDS" id="CCDS56566.1">
    <molecule id="Q9NS56-2"/>
</dbReference>
<dbReference type="CCDS" id="CCDS6527.1">
    <molecule id="Q9NS56-1"/>
</dbReference>
<dbReference type="RefSeq" id="NP_001182551.1">
    <molecule id="Q9NS56-2"/>
    <property type="nucleotide sequence ID" value="NM_001195622.2"/>
</dbReference>
<dbReference type="RefSeq" id="NP_005793.2">
    <molecule id="Q9NS56-1"/>
    <property type="nucleotide sequence ID" value="NM_005802.4"/>
</dbReference>
<dbReference type="SMR" id="Q9NS56"/>
<dbReference type="BioGRID" id="115505">
    <property type="interactions" value="96"/>
</dbReference>
<dbReference type="FunCoup" id="Q9NS56">
    <property type="interactions" value="1905"/>
</dbReference>
<dbReference type="IntAct" id="Q9NS56">
    <property type="interactions" value="49"/>
</dbReference>
<dbReference type="MINT" id="Q9NS56"/>
<dbReference type="STRING" id="9606.ENSP00000353735"/>
<dbReference type="GlyGen" id="Q9NS56">
    <property type="glycosylation" value="1 site, 1 O-linked glycan (1 site)"/>
</dbReference>
<dbReference type="iPTMnet" id="Q9NS56"/>
<dbReference type="PhosphoSitePlus" id="Q9NS56"/>
<dbReference type="BioMuta" id="TOPORS"/>
<dbReference type="DMDM" id="74752935"/>
<dbReference type="jPOST" id="Q9NS56"/>
<dbReference type="MassIVE" id="Q9NS56"/>
<dbReference type="PaxDb" id="9606-ENSP00000353735"/>
<dbReference type="PeptideAtlas" id="Q9NS56"/>
<dbReference type="ProteomicsDB" id="82481">
    <molecule id="Q9NS56-1"/>
</dbReference>
<dbReference type="ProteomicsDB" id="82482">
    <molecule id="Q9NS56-2"/>
</dbReference>
<dbReference type="Pumba" id="Q9NS56"/>
<dbReference type="Antibodypedia" id="25068">
    <property type="antibodies" value="220 antibodies from 25 providers"/>
</dbReference>
<dbReference type="DNASU" id="10210"/>
<dbReference type="Ensembl" id="ENST00000360538.7">
    <molecule id="Q9NS56-1"/>
    <property type="protein sequence ID" value="ENSP00000353735.2"/>
    <property type="gene ID" value="ENSG00000197579.8"/>
</dbReference>
<dbReference type="Ensembl" id="ENST00000379858.1">
    <molecule id="Q9NS56-2"/>
    <property type="protein sequence ID" value="ENSP00000369187.1"/>
    <property type="gene ID" value="ENSG00000197579.8"/>
</dbReference>
<dbReference type="GeneID" id="10210"/>
<dbReference type="KEGG" id="hsa:10210"/>
<dbReference type="MANE-Select" id="ENST00000360538.7">
    <property type="protein sequence ID" value="ENSP00000353735.2"/>
    <property type="RefSeq nucleotide sequence ID" value="NM_005802.5"/>
    <property type="RefSeq protein sequence ID" value="NP_005793.2"/>
</dbReference>
<dbReference type="UCSC" id="uc003zrb.4">
    <molecule id="Q9NS56-1"/>
    <property type="organism name" value="human"/>
</dbReference>
<dbReference type="AGR" id="HGNC:21653"/>
<dbReference type="CTD" id="10210"/>
<dbReference type="DisGeNET" id="10210"/>
<dbReference type="GeneCards" id="TOPORS"/>
<dbReference type="GeneReviews" id="TOPORS"/>
<dbReference type="HGNC" id="HGNC:21653">
    <property type="gene designation" value="TOPORS"/>
</dbReference>
<dbReference type="HPA" id="ENSG00000197579">
    <property type="expression patterns" value="Low tissue specificity"/>
</dbReference>
<dbReference type="MalaCards" id="TOPORS"/>
<dbReference type="MIM" id="609507">
    <property type="type" value="gene"/>
</dbReference>
<dbReference type="MIM" id="609923">
    <property type="type" value="phenotype"/>
</dbReference>
<dbReference type="neXtProt" id="NX_Q9NS56"/>
<dbReference type="OpenTargets" id="ENSG00000197579"/>
<dbReference type="Orphanet" id="2754">
    <property type="disease" value="Orofaciodigital syndrome type 6"/>
</dbReference>
<dbReference type="Orphanet" id="791">
    <property type="disease" value="Retinitis pigmentosa"/>
</dbReference>
<dbReference type="PharmGKB" id="PA134979531"/>
<dbReference type="VEuPathDB" id="HostDB:ENSG00000197579"/>
<dbReference type="eggNOG" id="KOG4430">
    <property type="taxonomic scope" value="Eukaryota"/>
</dbReference>
<dbReference type="GeneTree" id="ENSGT00530000064170"/>
<dbReference type="HOGENOM" id="CLU_012046_0_0_1"/>
<dbReference type="InParanoid" id="Q9NS56"/>
<dbReference type="OMA" id="DCVIVGF"/>
<dbReference type="OrthoDB" id="21204at2759"/>
<dbReference type="PAN-GO" id="Q9NS56">
    <property type="GO annotations" value="7 GO annotations based on evolutionary models"/>
</dbReference>
<dbReference type="PhylomeDB" id="Q9NS56"/>
<dbReference type="TreeFam" id="TF339497"/>
<dbReference type="PathwayCommons" id="Q9NS56"/>
<dbReference type="Reactome" id="R-HSA-3899300">
    <property type="pathway name" value="SUMOylation of transcription cofactors"/>
</dbReference>
<dbReference type="Reactome" id="R-HSA-4085377">
    <property type="pathway name" value="SUMOylation of SUMOylation proteins"/>
</dbReference>
<dbReference type="Reactome" id="R-HSA-4755510">
    <property type="pathway name" value="SUMOylation of immune response proteins"/>
</dbReference>
<dbReference type="SignaLink" id="Q9NS56"/>
<dbReference type="SIGNOR" id="Q9NS56"/>
<dbReference type="BioGRID-ORCS" id="10210">
    <property type="hits" value="13 hits in 1201 CRISPR screens"/>
</dbReference>
<dbReference type="CD-CODE" id="8C2F96ED">
    <property type="entry name" value="Centrosome"/>
</dbReference>
<dbReference type="CD-CODE" id="B5B9A610">
    <property type="entry name" value="PML body"/>
</dbReference>
<dbReference type="ChiTaRS" id="TOPORS">
    <property type="organism name" value="human"/>
</dbReference>
<dbReference type="GeneWiki" id="TOPORS"/>
<dbReference type="GenomeRNAi" id="10210"/>
<dbReference type="Pharos" id="Q9NS56">
    <property type="development level" value="Tbio"/>
</dbReference>
<dbReference type="PRO" id="PR:Q9NS56"/>
<dbReference type="Proteomes" id="UP000005640">
    <property type="component" value="Chromosome 9"/>
</dbReference>
<dbReference type="RNAct" id="Q9NS56">
    <property type="molecule type" value="protein"/>
</dbReference>
<dbReference type="Bgee" id="ENSG00000197579">
    <property type="expression patterns" value="Expressed in secondary oocyte and 207 other cell types or tissues"/>
</dbReference>
<dbReference type="GO" id="GO:0005814">
    <property type="term" value="C:centriole"/>
    <property type="evidence" value="ECO:0000314"/>
    <property type="project" value="BHF-UCL"/>
</dbReference>
<dbReference type="GO" id="GO:0036064">
    <property type="term" value="C:ciliary basal body"/>
    <property type="evidence" value="ECO:0000314"/>
    <property type="project" value="BHF-UCL"/>
</dbReference>
<dbReference type="GO" id="GO:0000930">
    <property type="term" value="C:gamma-tubulin complex"/>
    <property type="evidence" value="ECO:0000314"/>
    <property type="project" value="BHF-UCL"/>
</dbReference>
<dbReference type="GO" id="GO:0030496">
    <property type="term" value="C:midbody"/>
    <property type="evidence" value="ECO:0000304"/>
    <property type="project" value="BHF-UCL"/>
</dbReference>
<dbReference type="GO" id="GO:0016607">
    <property type="term" value="C:nuclear speck"/>
    <property type="evidence" value="ECO:0000314"/>
    <property type="project" value="UniProtKB"/>
</dbReference>
<dbReference type="GO" id="GO:0005654">
    <property type="term" value="C:nucleoplasm"/>
    <property type="evidence" value="ECO:0000314"/>
    <property type="project" value="HPA"/>
</dbReference>
<dbReference type="GO" id="GO:0005634">
    <property type="term" value="C:nucleus"/>
    <property type="evidence" value="ECO:0000314"/>
    <property type="project" value="UniProtKB"/>
</dbReference>
<dbReference type="GO" id="GO:0032391">
    <property type="term" value="C:photoreceptor connecting cilium"/>
    <property type="evidence" value="ECO:0000314"/>
    <property type="project" value="BHF-UCL"/>
</dbReference>
<dbReference type="GO" id="GO:0016605">
    <property type="term" value="C:PML body"/>
    <property type="evidence" value="ECO:0000314"/>
    <property type="project" value="UniProtKB"/>
</dbReference>
<dbReference type="GO" id="GO:0000922">
    <property type="term" value="C:spindle pole"/>
    <property type="evidence" value="ECO:0000314"/>
    <property type="project" value="BHF-UCL"/>
</dbReference>
<dbReference type="GO" id="GO:0000151">
    <property type="term" value="C:ubiquitin ligase complex"/>
    <property type="evidence" value="ECO:0000314"/>
    <property type="project" value="BHF-UCL"/>
</dbReference>
<dbReference type="GO" id="GO:0003823">
    <property type="term" value="F:antigen binding"/>
    <property type="evidence" value="ECO:0000353"/>
    <property type="project" value="UniProtKB"/>
</dbReference>
<dbReference type="GO" id="GO:0003677">
    <property type="term" value="F:DNA binding"/>
    <property type="evidence" value="ECO:0000314"/>
    <property type="project" value="UniProtKB"/>
</dbReference>
<dbReference type="GO" id="GO:0044547">
    <property type="term" value="F:DNA topoisomerase binding"/>
    <property type="evidence" value="ECO:0000353"/>
    <property type="project" value="UniProtKB"/>
</dbReference>
<dbReference type="GO" id="GO:0019789">
    <property type="term" value="F:SUMO transferase activity"/>
    <property type="evidence" value="ECO:0000314"/>
    <property type="project" value="UniProtKB"/>
</dbReference>
<dbReference type="GO" id="GO:0061630">
    <property type="term" value="F:ubiquitin protein ligase activity"/>
    <property type="evidence" value="ECO:0000314"/>
    <property type="project" value="BHF-UCL"/>
</dbReference>
<dbReference type="GO" id="GO:0004842">
    <property type="term" value="F:ubiquitin-protein transferase activity"/>
    <property type="evidence" value="ECO:0000314"/>
    <property type="project" value="UniProtKB"/>
</dbReference>
<dbReference type="GO" id="GO:0008270">
    <property type="term" value="F:zinc ion binding"/>
    <property type="evidence" value="ECO:0007669"/>
    <property type="project" value="UniProtKB-KW"/>
</dbReference>
<dbReference type="GO" id="GO:0006974">
    <property type="term" value="P:DNA damage response"/>
    <property type="evidence" value="ECO:0000314"/>
    <property type="project" value="UniProtKB"/>
</dbReference>
<dbReference type="GO" id="GO:0006351">
    <property type="term" value="P:DNA-templated transcription"/>
    <property type="evidence" value="ECO:0000303"/>
    <property type="project" value="UniProtKB"/>
</dbReference>
<dbReference type="GO" id="GO:0008630">
    <property type="term" value="P:intrinsic apoptotic signaling pathway in response to DNA damage"/>
    <property type="evidence" value="ECO:0000314"/>
    <property type="project" value="UniProtKB"/>
</dbReference>
<dbReference type="GO" id="GO:0042771">
    <property type="term" value="P:intrinsic apoptotic signaling pathway in response to DNA damage by p53 class mediator"/>
    <property type="evidence" value="ECO:0007669"/>
    <property type="project" value="Ensembl"/>
</dbReference>
<dbReference type="GO" id="GO:0051457">
    <property type="term" value="P:maintenance of protein location in nucleus"/>
    <property type="evidence" value="ECO:0000314"/>
    <property type="project" value="UniProtKB"/>
</dbReference>
<dbReference type="GO" id="GO:0043066">
    <property type="term" value="P:negative regulation of apoptotic process"/>
    <property type="evidence" value="ECO:0000250"/>
    <property type="project" value="BHF-UCL"/>
</dbReference>
<dbReference type="GO" id="GO:0035845">
    <property type="term" value="P:photoreceptor cell outer segment organization"/>
    <property type="evidence" value="ECO:0000250"/>
    <property type="project" value="BHF-UCL"/>
</dbReference>
<dbReference type="GO" id="GO:0045893">
    <property type="term" value="P:positive regulation of DNA-templated transcription"/>
    <property type="evidence" value="ECO:0007669"/>
    <property type="project" value="Ensembl"/>
</dbReference>
<dbReference type="GO" id="GO:0043161">
    <property type="term" value="P:proteasome-mediated ubiquitin-dependent protein catabolic process"/>
    <property type="evidence" value="ECO:0000315"/>
    <property type="project" value="UniProtKB"/>
</dbReference>
<dbReference type="GO" id="GO:0070936">
    <property type="term" value="P:protein K48-linked ubiquitination"/>
    <property type="evidence" value="ECO:0000314"/>
    <property type="project" value="BHF-UCL"/>
</dbReference>
<dbReference type="GO" id="GO:0034504">
    <property type="term" value="P:protein localization to nucleus"/>
    <property type="evidence" value="ECO:0000315"/>
    <property type="project" value="UniProtKB"/>
</dbReference>
<dbReference type="GO" id="GO:0006513">
    <property type="term" value="P:protein monoubiquitination"/>
    <property type="evidence" value="ECO:0000314"/>
    <property type="project" value="BHF-UCL"/>
</dbReference>
<dbReference type="GO" id="GO:0000209">
    <property type="term" value="P:protein polyubiquitination"/>
    <property type="evidence" value="ECO:0000314"/>
    <property type="project" value="BHF-UCL"/>
</dbReference>
<dbReference type="GO" id="GO:0016925">
    <property type="term" value="P:protein sumoylation"/>
    <property type="evidence" value="ECO:0000314"/>
    <property type="project" value="UniProtKB"/>
</dbReference>
<dbReference type="GO" id="GO:0042127">
    <property type="term" value="P:regulation of cell population proliferation"/>
    <property type="evidence" value="ECO:0007669"/>
    <property type="project" value="Ensembl"/>
</dbReference>
<dbReference type="GO" id="GO:0010842">
    <property type="term" value="P:retina layer formation"/>
    <property type="evidence" value="ECO:0000250"/>
    <property type="project" value="BHF-UCL"/>
</dbReference>
<dbReference type="GO" id="GO:0006511">
    <property type="term" value="P:ubiquitin-dependent protein catabolic process"/>
    <property type="evidence" value="ECO:0000315"/>
    <property type="project" value="UniProtKB"/>
</dbReference>
<dbReference type="CDD" id="cd16574">
    <property type="entry name" value="RING-HC_Topors"/>
    <property type="match status" value="1"/>
</dbReference>
<dbReference type="FunFam" id="3.30.40.10:FF:000136">
    <property type="entry name" value="E3 ubiquitin-protein ligase Topors"/>
    <property type="match status" value="1"/>
</dbReference>
<dbReference type="Gene3D" id="3.30.40.10">
    <property type="entry name" value="Zinc/RING finger domain, C3HC4 (zinc finger)"/>
    <property type="match status" value="1"/>
</dbReference>
<dbReference type="InterPro" id="IPR018957">
    <property type="entry name" value="Znf_C3HC4_RING-type"/>
</dbReference>
<dbReference type="InterPro" id="IPR001841">
    <property type="entry name" value="Znf_RING"/>
</dbReference>
<dbReference type="InterPro" id="IPR013083">
    <property type="entry name" value="Znf_RING/FYVE/PHD"/>
</dbReference>
<dbReference type="InterPro" id="IPR017907">
    <property type="entry name" value="Znf_RING_CS"/>
</dbReference>
<dbReference type="PANTHER" id="PTHR46077">
    <property type="entry name" value="E3 UBIQUITIN-PROTEIN LIGASE TOPORS"/>
    <property type="match status" value="1"/>
</dbReference>
<dbReference type="PANTHER" id="PTHR46077:SF2">
    <property type="entry name" value="E3 UBIQUITIN-PROTEIN LIGASE TOPORS"/>
    <property type="match status" value="1"/>
</dbReference>
<dbReference type="Pfam" id="PF00097">
    <property type="entry name" value="zf-C3HC4"/>
    <property type="match status" value="1"/>
</dbReference>
<dbReference type="SMART" id="SM00184">
    <property type="entry name" value="RING"/>
    <property type="match status" value="1"/>
</dbReference>
<dbReference type="SUPFAM" id="SSF57850">
    <property type="entry name" value="RING/U-box"/>
    <property type="match status" value="1"/>
</dbReference>
<dbReference type="PROSITE" id="PS00518">
    <property type="entry name" value="ZF_RING_1"/>
    <property type="match status" value="1"/>
</dbReference>
<dbReference type="PROSITE" id="PS50089">
    <property type="entry name" value="ZF_RING_2"/>
    <property type="match status" value="1"/>
</dbReference>
<feature type="chain" id="PRO_0000232626" description="E3 ubiquitin-protein ligase Topors">
    <location>
        <begin position="1"/>
        <end position="1045"/>
    </location>
</feature>
<feature type="zinc finger region" description="RING-type" evidence="2">
    <location>
        <begin position="103"/>
        <end position="142"/>
    </location>
</feature>
<feature type="region of interest" description="E3 ubiquitin-protein ligase activity">
    <location>
        <begin position="1"/>
        <end position="195"/>
    </location>
</feature>
<feature type="region of interest" description="Disordered" evidence="3">
    <location>
        <begin position="1"/>
        <end position="35"/>
    </location>
</feature>
<feature type="region of interest" description="Required for DNA-binding">
    <location>
        <begin position="51"/>
        <end position="374"/>
    </location>
</feature>
<feature type="region of interest" description="Interaction with SUMO1" evidence="7">
    <location>
        <begin position="437"/>
        <end position="654"/>
    </location>
</feature>
<feature type="region of interest" description="Required for sumoylation and localization to discrete nuclear foci">
    <location>
        <begin position="437"/>
        <end position="574"/>
    </location>
</feature>
<feature type="region of interest" description="Disordered" evidence="3">
    <location>
        <begin position="442"/>
        <end position="475"/>
    </location>
</feature>
<feature type="region of interest" description="Interaction with TOP1" evidence="4">
    <location>
        <begin position="456"/>
        <end position="882"/>
    </location>
</feature>
<feature type="region of interest" description="Interaction with p53/TP53" evidence="5">
    <location>
        <begin position="456"/>
        <end position="731"/>
    </location>
</feature>
<feature type="region of interest" description="Disordered" evidence="3">
    <location>
        <begin position="511"/>
        <end position="692"/>
    </location>
</feature>
<feature type="region of interest" description="Disordered" evidence="3">
    <location>
        <begin position="713"/>
        <end position="936"/>
    </location>
</feature>
<feature type="region of interest" description="Interaction with UBE2I" evidence="7">
    <location>
        <begin position="854"/>
        <end position="917"/>
    </location>
</feature>
<feature type="compositionally biased region" description="Polar residues" evidence="3">
    <location>
        <begin position="453"/>
        <end position="463"/>
    </location>
</feature>
<feature type="compositionally biased region" description="Low complexity" evidence="3">
    <location>
        <begin position="521"/>
        <end position="534"/>
    </location>
</feature>
<feature type="compositionally biased region" description="Basic and acidic residues" evidence="3">
    <location>
        <begin position="539"/>
        <end position="565"/>
    </location>
</feature>
<feature type="compositionally biased region" description="Polar residues" evidence="3">
    <location>
        <begin position="566"/>
        <end position="578"/>
    </location>
</feature>
<feature type="compositionally biased region" description="Basic residues" evidence="3">
    <location>
        <begin position="588"/>
        <end position="597"/>
    </location>
</feature>
<feature type="compositionally biased region" description="Basic residues" evidence="3">
    <location>
        <begin position="613"/>
        <end position="630"/>
    </location>
</feature>
<feature type="compositionally biased region" description="Basic residues" evidence="3">
    <location>
        <begin position="637"/>
        <end position="647"/>
    </location>
</feature>
<feature type="compositionally biased region" description="Low complexity" evidence="3">
    <location>
        <begin position="654"/>
        <end position="669"/>
    </location>
</feature>
<feature type="compositionally biased region" description="Basic residues" evidence="3">
    <location>
        <begin position="721"/>
        <end position="730"/>
    </location>
</feature>
<feature type="compositionally biased region" description="Polar residues" evidence="3">
    <location>
        <begin position="731"/>
        <end position="747"/>
    </location>
</feature>
<feature type="compositionally biased region" description="Basic and acidic residues" evidence="3">
    <location>
        <begin position="755"/>
        <end position="766"/>
    </location>
</feature>
<feature type="compositionally biased region" description="Basic and acidic residues" evidence="3">
    <location>
        <begin position="816"/>
        <end position="825"/>
    </location>
</feature>
<feature type="compositionally biased region" description="Basic residues" evidence="3">
    <location>
        <begin position="854"/>
        <end position="863"/>
    </location>
</feature>
<feature type="compositionally biased region" description="Basic residues" evidence="3">
    <location>
        <begin position="880"/>
        <end position="897"/>
    </location>
</feature>
<feature type="compositionally biased region" description="Basic and acidic residues" evidence="3">
    <location>
        <begin position="913"/>
        <end position="923"/>
    </location>
</feature>
<feature type="modified residue" description="Phosphoserine" evidence="16 22 23 24 25 26 27">
    <location>
        <position position="98"/>
    </location>
</feature>
<feature type="modified residue" description="Phosphoserine" evidence="26">
    <location>
        <position position="194"/>
    </location>
</feature>
<feature type="modified residue" description="Phosphoserine" evidence="16">
    <location>
        <position position="499"/>
    </location>
</feature>
<feature type="modified residue" description="Phosphoserine" evidence="16 26">
    <location>
        <position position="585"/>
    </location>
</feature>
<feature type="modified residue" description="Phosphoserine; by PLK1" evidence="17">
    <location>
        <position position="718"/>
    </location>
</feature>
<feature type="modified residue" description="Phosphoserine" evidence="26">
    <location>
        <position position="734"/>
    </location>
</feature>
<feature type="modified residue" description="Phosphoserine" evidence="23 25">
    <location>
        <position position="864"/>
    </location>
</feature>
<feature type="modified residue" description="Phosphoserine" evidence="16 23 25">
    <location>
        <position position="866"/>
    </location>
</feature>
<feature type="modified residue" description="Phosphoserine" evidence="1">
    <location>
        <position position="912"/>
    </location>
</feature>
<feature type="modified residue" description="Phosphoserine" evidence="1">
    <location>
        <position position="914"/>
    </location>
</feature>
<feature type="modified residue" description="Phosphoserine" evidence="1">
    <location>
        <position position="1028"/>
    </location>
</feature>
<feature type="cross-link" description="Glycyl lysine isopeptide (Lys-Gly) (interchain with G-Cter in SUMO2)" evidence="31">
    <location>
        <position position="73"/>
    </location>
</feature>
<feature type="cross-link" description="Glycyl lysine isopeptide (Lys-Gly) (interchain with G-Cter in SUMO2)" evidence="28 29 30 31">
    <location>
        <position position="76"/>
    </location>
</feature>
<feature type="cross-link" description="Glycyl lysine isopeptide (Lys-Gly) (interchain with G-Cter in SUMO2)" evidence="28 31">
    <location>
        <position position="83"/>
    </location>
</feature>
<feature type="cross-link" description="Glycyl lysine isopeptide (Lys-Gly) (interchain with G-Cter in SUMO2)" evidence="31">
    <location>
        <position position="88"/>
    </location>
</feature>
<feature type="cross-link" description="Glycyl lysine isopeptide (Lys-Gly) (interchain with G-Cter in SUMO2)" evidence="31">
    <location>
        <position position="159"/>
    </location>
</feature>
<feature type="cross-link" description="Glycyl lysine isopeptide (Lys-Gly) (interchain with G-Cter in SUMO2)" evidence="28 31">
    <location>
        <position position="249"/>
    </location>
</feature>
<feature type="cross-link" description="Glycyl lysine isopeptide (Lys-Gly) (interchain with G-Cter in SUMO)">
    <location>
        <position position="560"/>
    </location>
</feature>
<feature type="cross-link" description="Glycyl lysine isopeptide (Lys-Gly) (interchain with G-Cter in SUMO2)" evidence="28 29 30 31">
    <location>
        <position position="701"/>
    </location>
</feature>
<feature type="cross-link" description="Glycyl lysine isopeptide (Lys-Gly) (interchain with G-Cter in SUMO2)" evidence="31">
    <location>
        <position position="819"/>
    </location>
</feature>
<feature type="cross-link" description="Glycyl lysine isopeptide (Lys-Gly) (interchain with G-Cter in SUMO2)" evidence="31">
    <location>
        <position position="837"/>
    </location>
</feature>
<feature type="splice variant" id="VSP_017916" description="In isoform 2." evidence="19">
    <location>
        <begin position="1"/>
        <end position="65"/>
    </location>
</feature>
<feature type="splice variant" id="VSP_017917" description="In isoform 2." evidence="19">
    <original>E</original>
    <variation>M</variation>
    <location>
        <position position="66"/>
    </location>
</feature>
<feature type="sequence variant" id="VAR_037629" description="In dbSNP:rs17855104." evidence="10">
    <original>A</original>
    <variation>T</variation>
    <location>
        <position position="154"/>
    </location>
</feature>
<feature type="sequence variant" id="VAR_037630" description="In dbSNP:rs17855103." evidence="10">
    <original>E</original>
    <variation>K</variation>
    <location>
        <position position="517"/>
    </location>
</feature>
<feature type="sequence variant" id="VAR_037631" description="In dbSNP:rs17857515." evidence="10">
    <original>N</original>
    <variation>D</variation>
    <location>
        <position position="749"/>
    </location>
</feature>
<feature type="sequence variant" id="VAR_037632" description="In dbSNP:rs36034138.">
    <original>P</original>
    <variation>R</variation>
    <location>
        <position position="812"/>
    </location>
</feature>
<feature type="mutagenesis site" description="No effect on sumoylation." evidence="7">
    <original>K</original>
    <variation>R</variation>
    <location>
        <position position="76"/>
    </location>
</feature>
<feature type="mutagenesis site" description="Loss of phosphorylation but no effect on E3 ubiquitin-protein ligase activity." evidence="16">
    <original>S</original>
    <variation>A</variation>
    <location>
        <position position="98"/>
    </location>
</feature>
<feature type="mutagenesis site" description="Increase in E3 ubiquitin-protein ligase activity and increased binding to UBE2D1. No effect on SUMO1-protein ligase activity." evidence="16">
    <original>S</original>
    <variation>D</variation>
    <location>
        <position position="98"/>
    </location>
</feature>
<feature type="mutagenesis site" description="Abrogates E3 ubiquitin-protein ligase activity." evidence="9">
    <original>W</original>
    <variation>A</variation>
    <location>
        <position position="131"/>
    </location>
</feature>
<feature type="mutagenesis site" description="No effect on sumoylation." evidence="7">
    <original>K</original>
    <variation>R</variation>
    <location>
        <position position="301"/>
    </location>
</feature>
<feature type="mutagenesis site" description="No effect on sumoylation." evidence="7">
    <original>K</original>
    <variation>R</variation>
    <location>
        <position position="485"/>
    </location>
</feature>
<feature type="mutagenesis site" description="Strongly reduces sumoylation." evidence="7">
    <original>K</original>
    <variation>R</variation>
    <location>
        <position position="560"/>
    </location>
</feature>
<feature type="mutagenesis site" description="Loss of phosphorylation by PLK1 and increases in p53/TP53 stability." evidence="17">
    <original>S</original>
    <variation>A</variation>
    <location>
        <position position="718"/>
    </location>
</feature>
<feature type="mutagenesis site" description="No effect on sumoylation." evidence="7">
    <original>K</original>
    <variation>R</variation>
    <location>
        <position position="921"/>
    </location>
</feature>
<feature type="sequence conflict" description="In Ref. 5; AAC98530." evidence="20" ref="5">
    <original>CF</original>
    <variation>K</variation>
    <location>
        <begin position="124"/>
        <end position="125"/>
    </location>
</feature>
<feature type="sequence conflict" description="In Ref. 1; AAD23379." evidence="20" ref="1">
    <original>N</original>
    <variation>S</variation>
    <location>
        <position position="257"/>
    </location>
</feature>
<feature type="sequence conflict" description="In Ref. 1; AAD23379." evidence="20" ref="1">
    <original>F</original>
    <variation>S</variation>
    <location>
        <position position="308"/>
    </location>
</feature>
<feature type="sequence conflict" description="In Ref. 1; AAD23379." evidence="20" ref="1">
    <original>E</original>
    <variation>G</variation>
    <location>
        <position position="922"/>
    </location>
</feature>
<feature type="sequence conflict" description="In Ref. 1; AAD23379." evidence="20" ref="1">
    <original>R</original>
    <variation>K</variation>
    <location>
        <position position="1040"/>
    </location>
</feature>
<reference key="1">
    <citation type="journal article" date="1999" name="Nucleic Acids Res.">
        <title>Interaction between human topoisomerase I and a novel RING finger/arginine-serine protein.</title>
        <authorList>
            <person name="Haluska P. Jr."/>
            <person name="Saleem A."/>
            <person name="Rasheed Z."/>
            <person name="Ahmed F."/>
            <person name="Su E.W."/>
            <person name="Liu L.F."/>
            <person name="Rubin E.H."/>
        </authorList>
    </citation>
    <scope>NUCLEOTIDE SEQUENCE [MRNA] (ISOFORM 1)</scope>
    <scope>INTERACTION WITH TOP1</scope>
    <scope>SUBCELLULAR LOCATION</scope>
</reference>
<reference key="2">
    <citation type="journal article" date="2001" name="J. Biol. Chem.">
        <title>Cloning and characterization of LUN, a novel RING-finger protein that is highly expressed in lung and specifically binds to a palindromic sequence.</title>
        <authorList>
            <person name="Chu D."/>
            <person name="Kakazu N."/>
            <person name="Gorrin-Rivas M.J."/>
            <person name="Lu H.P."/>
            <person name="Kawata M."/>
            <person name="Abe T."/>
            <person name="Ueda K."/>
            <person name="Adachi Y."/>
        </authorList>
    </citation>
    <scope>NUCLEOTIDE SEQUENCE [MRNA] (ISOFORMS 1 AND 2)</scope>
    <scope>PUTATIVE DNA-BINDING</scope>
    <scope>SUBCELLULAR LOCATION</scope>
    <scope>TISSUE SPECIFICITY</scope>
    <source>
        <tissue>Lung</tissue>
    </source>
</reference>
<reference key="3">
    <citation type="journal article" date="2004" name="Nature">
        <title>DNA sequence and analysis of human chromosome 9.</title>
        <authorList>
            <person name="Humphray S.J."/>
            <person name="Oliver K."/>
            <person name="Hunt A.R."/>
            <person name="Plumb R.W."/>
            <person name="Loveland J.E."/>
            <person name="Howe K.L."/>
            <person name="Andrews T.D."/>
            <person name="Searle S."/>
            <person name="Hunt S.E."/>
            <person name="Scott C.E."/>
            <person name="Jones M.C."/>
            <person name="Ainscough R."/>
            <person name="Almeida J.P."/>
            <person name="Ambrose K.D."/>
            <person name="Ashwell R.I.S."/>
            <person name="Babbage A.K."/>
            <person name="Babbage S."/>
            <person name="Bagguley C.L."/>
            <person name="Bailey J."/>
            <person name="Banerjee R."/>
            <person name="Barker D.J."/>
            <person name="Barlow K.F."/>
            <person name="Bates K."/>
            <person name="Beasley H."/>
            <person name="Beasley O."/>
            <person name="Bird C.P."/>
            <person name="Bray-Allen S."/>
            <person name="Brown A.J."/>
            <person name="Brown J.Y."/>
            <person name="Burford D."/>
            <person name="Burrill W."/>
            <person name="Burton J."/>
            <person name="Carder C."/>
            <person name="Carter N.P."/>
            <person name="Chapman J.C."/>
            <person name="Chen Y."/>
            <person name="Clarke G."/>
            <person name="Clark S.Y."/>
            <person name="Clee C.M."/>
            <person name="Clegg S."/>
            <person name="Collier R.E."/>
            <person name="Corby N."/>
            <person name="Crosier M."/>
            <person name="Cummings A.T."/>
            <person name="Davies J."/>
            <person name="Dhami P."/>
            <person name="Dunn M."/>
            <person name="Dutta I."/>
            <person name="Dyer L.W."/>
            <person name="Earthrowl M.E."/>
            <person name="Faulkner L."/>
            <person name="Fleming C.J."/>
            <person name="Frankish A."/>
            <person name="Frankland J.A."/>
            <person name="French L."/>
            <person name="Fricker D.G."/>
            <person name="Garner P."/>
            <person name="Garnett J."/>
            <person name="Ghori J."/>
            <person name="Gilbert J.G.R."/>
            <person name="Glison C."/>
            <person name="Grafham D.V."/>
            <person name="Gribble S."/>
            <person name="Griffiths C."/>
            <person name="Griffiths-Jones S."/>
            <person name="Grocock R."/>
            <person name="Guy J."/>
            <person name="Hall R.E."/>
            <person name="Hammond S."/>
            <person name="Harley J.L."/>
            <person name="Harrison E.S.I."/>
            <person name="Hart E.A."/>
            <person name="Heath P.D."/>
            <person name="Henderson C.D."/>
            <person name="Hopkins B.L."/>
            <person name="Howard P.J."/>
            <person name="Howden P.J."/>
            <person name="Huckle E."/>
            <person name="Johnson C."/>
            <person name="Johnson D."/>
            <person name="Joy A.A."/>
            <person name="Kay M."/>
            <person name="Keenan S."/>
            <person name="Kershaw J.K."/>
            <person name="Kimberley A.M."/>
            <person name="King A."/>
            <person name="Knights A."/>
            <person name="Laird G.K."/>
            <person name="Langford C."/>
            <person name="Lawlor S."/>
            <person name="Leongamornlert D.A."/>
            <person name="Leversha M."/>
            <person name="Lloyd C."/>
            <person name="Lloyd D.M."/>
            <person name="Lovell J."/>
            <person name="Martin S."/>
            <person name="Mashreghi-Mohammadi M."/>
            <person name="Matthews L."/>
            <person name="McLaren S."/>
            <person name="McLay K.E."/>
            <person name="McMurray A."/>
            <person name="Milne S."/>
            <person name="Nickerson T."/>
            <person name="Nisbett J."/>
            <person name="Nordsiek G."/>
            <person name="Pearce A.V."/>
            <person name="Peck A.I."/>
            <person name="Porter K.M."/>
            <person name="Pandian R."/>
            <person name="Pelan S."/>
            <person name="Phillimore B."/>
            <person name="Povey S."/>
            <person name="Ramsey Y."/>
            <person name="Rand V."/>
            <person name="Scharfe M."/>
            <person name="Sehra H.K."/>
            <person name="Shownkeen R."/>
            <person name="Sims S.K."/>
            <person name="Skuce C.D."/>
            <person name="Smith M."/>
            <person name="Steward C.A."/>
            <person name="Swarbreck D."/>
            <person name="Sycamore N."/>
            <person name="Tester J."/>
            <person name="Thorpe A."/>
            <person name="Tracey A."/>
            <person name="Tromans A."/>
            <person name="Thomas D.W."/>
            <person name="Wall M."/>
            <person name="Wallis J.M."/>
            <person name="West A.P."/>
            <person name="Whitehead S.L."/>
            <person name="Willey D.L."/>
            <person name="Williams S.A."/>
            <person name="Wilming L."/>
            <person name="Wray P.W."/>
            <person name="Young L."/>
            <person name="Ashurst J.L."/>
            <person name="Coulson A."/>
            <person name="Blocker H."/>
            <person name="Durbin R.M."/>
            <person name="Sulston J.E."/>
            <person name="Hubbard T."/>
            <person name="Jackson M.J."/>
            <person name="Bentley D.R."/>
            <person name="Beck S."/>
            <person name="Rogers J."/>
            <person name="Dunham I."/>
        </authorList>
    </citation>
    <scope>NUCLEOTIDE SEQUENCE [LARGE SCALE GENOMIC DNA]</scope>
</reference>
<reference key="4">
    <citation type="journal article" date="2004" name="Genome Res.">
        <title>The status, quality, and expansion of the NIH full-length cDNA project: the Mammalian Gene Collection (MGC).</title>
        <authorList>
            <consortium name="The MGC Project Team"/>
        </authorList>
    </citation>
    <scope>NUCLEOTIDE SEQUENCE [LARGE SCALE MRNA] (ISOFORM 1)</scope>
    <scope>VARIANTS THR-154; LYS-517 AND ASP-749</scope>
    <source>
        <tissue>Placenta</tissue>
    </source>
</reference>
<reference key="5">
    <citation type="journal article" date="1999" name="Gene">
        <title>Identification of a novel gene encoding a p53-associated protein.</title>
        <authorList>
            <person name="Zhou R."/>
            <person name="Wen H."/>
            <person name="Ao S.-Z."/>
        </authorList>
    </citation>
    <scope>NUCLEOTIDE SEQUENCE [MRNA] OF 51-1045 (ISOFORM 1)</scope>
    <scope>INTERACTION WITH TP53</scope>
    <scope>SUBCELLULAR LOCATION</scope>
    <scope>TISSUE SPECIFICITY</scope>
</reference>
<reference key="6">
    <citation type="journal article" date="2002" name="Exp. Cell Res.">
        <title>The topoisomerase I-binding RING protein, topors, is associated with promyelocytic leukemia nuclear bodies.</title>
        <authorList>
            <person name="Rasheed Z.A."/>
            <person name="Saleem A."/>
            <person name="Ravee Y."/>
            <person name="Pandolfi P.P."/>
            <person name="Rubin E.H."/>
        </authorList>
    </citation>
    <scope>SUBCELLULAR LOCATION</scope>
</reference>
<reference key="7">
    <citation type="journal article" date="2003" name="Exp. Cell Res.">
        <title>The DNA topoisomerase I binding protein topors as a novel cellular target for SUMO-1 modification: characterization of domains necessary for subcellular localization and sumolation.</title>
        <authorList>
            <person name="Weger S."/>
            <person name="Hammer E."/>
            <person name="Engstler M."/>
        </authorList>
    </citation>
    <scope>INTERACTION WITH SUMO1 AND UBE2I</scope>
    <scope>SUBCELLULAR LOCATION</scope>
    <scope>SUMOYLATION</scope>
    <scope>MUTAGENESIS OF LYS-76; LYS-301; LYS-485; LYS-560 AND LYS-921</scope>
</reference>
<reference key="8">
    <citation type="journal article" date="2004" name="J. Biol. Chem.">
        <title>Topors functions as an E3 ubiquitin ligase with specific E2 enzymes and ubiquitinates p53.</title>
        <authorList>
            <person name="Rajendra R."/>
            <person name="Malegaonkar D."/>
            <person name="Pungaliya P."/>
            <person name="Marshall H."/>
            <person name="Rasheed Z."/>
            <person name="Brownell J."/>
            <person name="Liu L.F."/>
            <person name="Lutzker S."/>
            <person name="Saleem A."/>
            <person name="Rubin E.H."/>
        </authorList>
    </citation>
    <scope>FUNCTION</scope>
    <scope>MUTAGENESIS OF TRP-131</scope>
</reference>
<reference key="9">
    <citation type="journal article" date="2004" name="Lung Cancer">
        <title>Expression of LUN gene that encodes a novel RING finger protein is correlated with development and progression of non-small cell lung cancer.</title>
        <authorList>
            <person name="Oyanagi H."/>
            <person name="Takenaka K."/>
            <person name="Ishikawa S."/>
            <person name="Kawano Y."/>
            <person name="Adachi Y."/>
            <person name="Ueda K."/>
            <person name="Wada H."/>
            <person name="Tanaka F."/>
        </authorList>
    </citation>
    <scope>REDUCED EXPRESSION IN LUNG CANCERS</scope>
</reference>
<reference key="10">
    <citation type="journal article" date="2004" name="Oncogene">
        <title>The topoisomerase I- and p53-binding protein topors is differentially expressed in normal and malignant human tissues and may function as a tumor suppressor.</title>
        <authorList>
            <person name="Saleem A."/>
            <person name="Dutta J."/>
            <person name="Malegaonkar D."/>
            <person name="Rasheed F."/>
            <person name="Rasheed Z."/>
            <person name="Rajendra R."/>
            <person name="Marshall H."/>
            <person name="Luo M."/>
            <person name="Li H."/>
            <person name="Rubin E.H."/>
        </authorList>
    </citation>
    <scope>TISSUE SPECIFICITY</scope>
    <scope>REDUCED EXPRESSION IN COLON CANCERS</scope>
</reference>
<reference key="11">
    <citation type="journal article" date="2005" name="FEBS Lett.">
        <title>Topors acts as a SUMO-1 E3 ligase for p53 in vitro and in vivo.</title>
        <authorList>
            <person name="Weger S."/>
            <person name="Hammer E."/>
            <person name="Heilbronn R."/>
        </authorList>
    </citation>
    <scope>FUNCTION</scope>
    <scope>SUMOYLATION</scope>
</reference>
<reference key="12">
    <citation type="journal article" date="2005" name="Oncogene">
        <title>Topors, a p53 and topoisomerase I-binding RING finger protein, is a coactivator of p53 in growth suppression induced by DNA damage.</title>
        <authorList>
            <person name="Lin L."/>
            <person name="Ozaki T."/>
            <person name="Takada Y."/>
            <person name="Kageyama H."/>
            <person name="Nakamura Y."/>
            <person name="Hata A."/>
            <person name="Zhang J.H."/>
            <person name="Simonds W.F."/>
            <person name="Nakagawara A."/>
            <person name="Koseki H."/>
        </authorList>
    </citation>
    <scope>FUNCTION</scope>
    <scope>INDUCTION</scope>
</reference>
<reference key="13">
    <citation type="journal article" date="2007" name="Am. J. Hum. Genet.">
        <title>Mutations in TOPORS cause autosomal dominant retinitis pigmentosa with perivascular retinal pigment epithelium atrophy.</title>
        <authorList>
            <person name="Chakarova C.F."/>
            <person name="Papaioannou M.G."/>
            <person name="Khanna H."/>
            <person name="Lopez I."/>
            <person name="Waseem N."/>
            <person name="Shah A."/>
            <person name="Theis T."/>
            <person name="Friedman J."/>
            <person name="Maubaret C."/>
            <person name="Bujakowska K."/>
            <person name="Veraitch B."/>
            <person name="El-Aziz M.M.A."/>
            <person name="Prescott de Q."/>
            <person name="Parapuram S.K."/>
            <person name="Bickmore W.A."/>
            <person name="Munro P.M.G."/>
            <person name="Gal A."/>
            <person name="Hamel C.P."/>
            <person name="Marigo V."/>
            <person name="Ponting C.P."/>
            <person name="Wissinger B."/>
            <person name="Zrenner E."/>
            <person name="Matter K."/>
            <person name="Swaroop A."/>
            <person name="Koenekoop R.K."/>
            <person name="Bhattacharya S.S."/>
        </authorList>
    </citation>
    <scope>INVOLVEMENT IN RP31</scope>
</reference>
<reference key="14">
    <citation type="journal article" date="2007" name="J. Proteome Res.">
        <title>TOPORS functions as a SUMO-1 E3 ligase for chromatin-modifying proteins.</title>
        <authorList>
            <person name="Pungaliya P."/>
            <person name="Kulkarni D."/>
            <person name="Park H.J."/>
            <person name="Marshall H."/>
            <person name="Zheng H."/>
            <person name="Lackland H."/>
            <person name="Saleem A."/>
            <person name="Rubin E.H."/>
        </authorList>
    </citation>
    <scope>FUNCTION</scope>
    <scope>INTERACTION WITH SIN3A</scope>
</reference>
<reference key="15">
    <citation type="journal article" date="2008" name="Biochemistry">
        <title>Identification of phosphorylation sites of TOPORS and a role for serine 98 in the regulation of ubiquitin but not SUMO E3 ligase activity.</title>
        <authorList>
            <person name="Park H.J."/>
            <person name="Zheng H."/>
            <person name="Kulkarni D."/>
            <person name="Kerrigan J."/>
            <person name="Pungaliya P."/>
            <person name="Saleem A."/>
            <person name="Rubin E.H."/>
        </authorList>
    </citation>
    <scope>PHOSPHORYLATION AT SER-98; SER-499; SER-585 AND SER-866</scope>
    <scope>MUTAGENESIS OF SER-98</scope>
    <scope>IDENTIFICATION BY MASS SPECTROMETRY</scope>
</reference>
<reference key="16">
    <citation type="journal article" date="2008" name="J. Biol. Chem.">
        <title>Ubiquitination by TOPORS regulates the prostate tumor suppressor NKX3.1.</title>
        <authorList>
            <person name="Guan B."/>
            <person name="Pungaliya P."/>
            <person name="Li X."/>
            <person name="Uquillas C."/>
            <person name="Mutton L.N."/>
            <person name="Rubin E.H."/>
            <person name="Bieberich C.J."/>
        </authorList>
    </citation>
    <scope>FUNCTION</scope>
    <scope>INTERACTION WITH NKX3-1</scope>
    <scope>SUBCELLULAR LOCATION</scope>
</reference>
<reference key="17">
    <citation type="journal article" date="2008" name="Proc. Natl. Acad. Sci. U.S.A.">
        <title>A quantitative atlas of mitotic phosphorylation.</title>
        <authorList>
            <person name="Dephoure N."/>
            <person name="Zhou C."/>
            <person name="Villen J."/>
            <person name="Beausoleil S.A."/>
            <person name="Bakalarski C.E."/>
            <person name="Elledge S.J."/>
            <person name="Gygi S.P."/>
        </authorList>
    </citation>
    <scope>PHOSPHORYLATION [LARGE SCALE ANALYSIS] AT SER-98</scope>
    <scope>IDENTIFICATION BY MASS SPECTROMETRY [LARGE SCALE ANALYSIS]</scope>
    <source>
        <tissue>Cervix carcinoma</tissue>
    </source>
</reference>
<reference key="18">
    <citation type="journal article" date="2009" name="Anal. Chem.">
        <title>Lys-N and trypsin cover complementary parts of the phosphoproteome in a refined SCX-based approach.</title>
        <authorList>
            <person name="Gauci S."/>
            <person name="Helbig A.O."/>
            <person name="Slijper M."/>
            <person name="Krijgsveld J."/>
            <person name="Heck A.J."/>
            <person name="Mohammed S."/>
        </authorList>
    </citation>
    <scope>IDENTIFICATION BY MASS SPECTROMETRY [LARGE SCALE ANALYSIS]</scope>
</reference>
<reference key="19">
    <citation type="journal article" date="2009" name="J. Biol. Chem.">
        <title>Plk1-mediated phosphorylation of Topors regulates p53 stability.</title>
        <authorList>
            <person name="Yang X."/>
            <person name="Li H."/>
            <person name="Zhou Z."/>
            <person name="Wang W.H."/>
            <person name="Deng A."/>
            <person name="Andrisani O."/>
            <person name="Liu X."/>
        </authorList>
    </citation>
    <scope>FUNCTION</scope>
    <scope>INTERACTION WITH PLK1</scope>
    <scope>PHOSPHORYLATION AT SER-718 BY PLK1</scope>
    <scope>MUTAGENESIS OF SER-718</scope>
    <scope>SUBCELLULAR LOCATION</scope>
</reference>
<reference key="20">
    <citation type="journal article" date="2009" name="Sci. Signal.">
        <title>Quantitative phosphoproteomic analysis of T cell receptor signaling reveals system-wide modulation of protein-protein interactions.</title>
        <authorList>
            <person name="Mayya V."/>
            <person name="Lundgren D.H."/>
            <person name="Hwang S.-I."/>
            <person name="Rezaul K."/>
            <person name="Wu L."/>
            <person name="Eng J.K."/>
            <person name="Rodionov V."/>
            <person name="Han D.K."/>
        </authorList>
    </citation>
    <scope>PHOSPHORYLATION [LARGE SCALE ANALYSIS] AT SER-98; SER-864 AND SER-866</scope>
    <scope>IDENTIFICATION BY MASS SPECTROMETRY [LARGE SCALE ANALYSIS]</scope>
    <source>
        <tissue>Leukemic T-cell</tissue>
    </source>
</reference>
<reference key="21">
    <citation type="journal article" date="2010" name="Mol. Cell">
        <title>SUMOylation-dependent localization of IKKepsilon in PML nuclear bodies is essential for protection against DNA-damage-triggered cell death.</title>
        <authorList>
            <person name="Renner F."/>
            <person name="Moreno R."/>
            <person name="Schmitz M.L."/>
        </authorList>
    </citation>
    <scope>FUNCTION</scope>
    <scope>INTERACTION WITH IKBKE</scope>
    <scope>SUBCELLULAR LOCATION</scope>
</reference>
<reference key="22">
    <citation type="journal article" date="2010" name="Sci. Signal.">
        <title>Quantitative phosphoproteomics reveals widespread full phosphorylation site occupancy during mitosis.</title>
        <authorList>
            <person name="Olsen J.V."/>
            <person name="Vermeulen M."/>
            <person name="Santamaria A."/>
            <person name="Kumar C."/>
            <person name="Miller M.L."/>
            <person name="Jensen L.J."/>
            <person name="Gnad F."/>
            <person name="Cox J."/>
            <person name="Jensen T.S."/>
            <person name="Nigg E.A."/>
            <person name="Brunak S."/>
            <person name="Mann M."/>
        </authorList>
    </citation>
    <scope>PHOSPHORYLATION [LARGE SCALE ANALYSIS] AT SER-98</scope>
    <scope>IDENTIFICATION BY MASS SPECTROMETRY [LARGE SCALE ANALYSIS]</scope>
    <source>
        <tissue>Cervix carcinoma</tissue>
    </source>
</reference>
<reference key="23">
    <citation type="journal article" date="2011" name="Sci. Signal.">
        <title>System-wide temporal characterization of the proteome and phosphoproteome of human embryonic stem cell differentiation.</title>
        <authorList>
            <person name="Rigbolt K.T."/>
            <person name="Prokhorova T.A."/>
            <person name="Akimov V."/>
            <person name="Henningsen J."/>
            <person name="Johansen P.T."/>
            <person name="Kratchmarova I."/>
            <person name="Kassem M."/>
            <person name="Mann M."/>
            <person name="Olsen J.V."/>
            <person name="Blagoev B."/>
        </authorList>
    </citation>
    <scope>PHOSPHORYLATION [LARGE SCALE ANALYSIS] AT SER-98; SER-864 AND SER-866</scope>
    <scope>IDENTIFICATION BY MASS SPECTROMETRY [LARGE SCALE ANALYSIS]</scope>
</reference>
<reference key="24">
    <citation type="journal article" date="2013" name="J. Proteome Res.">
        <title>Toward a comprehensive characterization of a human cancer cell phosphoproteome.</title>
        <authorList>
            <person name="Zhou H."/>
            <person name="Di Palma S."/>
            <person name="Preisinger C."/>
            <person name="Peng M."/>
            <person name="Polat A.N."/>
            <person name="Heck A.J."/>
            <person name="Mohammed S."/>
        </authorList>
    </citation>
    <scope>PHOSPHORYLATION [LARGE SCALE ANALYSIS] AT SER-98; SER-194; SER-585 AND SER-734</scope>
    <scope>IDENTIFICATION BY MASS SPECTROMETRY [LARGE SCALE ANALYSIS]</scope>
    <source>
        <tissue>Cervix carcinoma</tissue>
        <tissue>Erythroleukemia</tissue>
    </source>
</reference>
<reference key="25">
    <citation type="journal article" date="2014" name="J. Proteomics">
        <title>An enzyme assisted RP-RPLC approach for in-depth analysis of human liver phosphoproteome.</title>
        <authorList>
            <person name="Bian Y."/>
            <person name="Song C."/>
            <person name="Cheng K."/>
            <person name="Dong M."/>
            <person name="Wang F."/>
            <person name="Huang J."/>
            <person name="Sun D."/>
            <person name="Wang L."/>
            <person name="Ye M."/>
            <person name="Zou H."/>
        </authorList>
    </citation>
    <scope>PHOSPHORYLATION [LARGE SCALE ANALYSIS] AT SER-98</scope>
    <scope>IDENTIFICATION BY MASS SPECTROMETRY [LARGE SCALE ANALYSIS]</scope>
    <source>
        <tissue>Liver</tissue>
    </source>
</reference>
<reference key="26">
    <citation type="journal article" date="2014" name="Nat. Struct. Mol. Biol.">
        <title>Uncovering global SUMOylation signaling networks in a site-specific manner.</title>
        <authorList>
            <person name="Hendriks I.A."/>
            <person name="D'Souza R.C."/>
            <person name="Yang B."/>
            <person name="Verlaan-de Vries M."/>
            <person name="Mann M."/>
            <person name="Vertegaal A.C."/>
        </authorList>
    </citation>
    <scope>SUMOYLATION [LARGE SCALE ANALYSIS] AT LYS-76; LYS-83; LYS-249 AND LYS-701</scope>
    <scope>IDENTIFICATION BY MASS SPECTROMETRY [LARGE SCALE ANALYSIS]</scope>
</reference>
<reference key="27">
    <citation type="journal article" date="2015" name="Cell Rep.">
        <title>SUMO-2 orchestrates chromatin modifiers in response to DNA damage.</title>
        <authorList>
            <person name="Hendriks I.A."/>
            <person name="Treffers L.W."/>
            <person name="Verlaan-de Vries M."/>
            <person name="Olsen J.V."/>
            <person name="Vertegaal A.C."/>
        </authorList>
    </citation>
    <scope>SUMOYLATION [LARGE SCALE ANALYSIS] AT LYS-76 AND LYS-701</scope>
    <scope>IDENTIFICATION BY MASS SPECTROMETRY [LARGE SCALE ANALYSIS]</scope>
</reference>
<reference key="28">
    <citation type="journal article" date="2015" name="Mol. Cell. Proteomics">
        <title>System-wide analysis of SUMOylation dynamics in response to replication stress reveals novel small ubiquitin-like modified target proteins and acceptor lysines relevant for genome stability.</title>
        <authorList>
            <person name="Xiao Z."/>
            <person name="Chang J.G."/>
            <person name="Hendriks I.A."/>
            <person name="Sigurdsson J.O."/>
            <person name="Olsen J.V."/>
            <person name="Vertegaal A.C."/>
        </authorList>
    </citation>
    <scope>SUMOYLATION [LARGE SCALE ANALYSIS] AT LYS-76 AND LYS-701</scope>
    <scope>IDENTIFICATION BY MASS SPECTROMETRY [LARGE SCALE ANALYSIS]</scope>
</reference>
<reference key="29">
    <citation type="journal article" date="2017" name="Nat. Struct. Mol. Biol.">
        <title>Site-specific mapping of the human SUMO proteome reveals co-modification with phosphorylation.</title>
        <authorList>
            <person name="Hendriks I.A."/>
            <person name="Lyon D."/>
            <person name="Young C."/>
            <person name="Jensen L.J."/>
            <person name="Vertegaal A.C."/>
            <person name="Nielsen M.L."/>
        </authorList>
    </citation>
    <scope>SUMOYLATION [LARGE SCALE ANALYSIS] AT LYS-73; LYS-76; LYS-83; LYS-88; LYS-159; LYS-249; LYS-701; LYS-819 AND LYS-837</scope>
    <scope>IDENTIFICATION BY MASS SPECTROMETRY [LARGE SCALE ANALYSIS]</scope>
</reference>
<gene>
    <name type="primary">TOPORS</name>
    <name type="synonym">LUN</name>
    <name type="synonym">TP53BPL</name>
</gene>
<proteinExistence type="evidence at protein level"/>
<protein>
    <recommendedName>
        <fullName>E3 ubiquitin-protein ligase Topors</fullName>
        <ecNumber>2.3.2.27</ecNumber>
    </recommendedName>
    <alternativeName>
        <fullName evidence="20">RING-type E3 ubiquitin transferase Topors</fullName>
    </alternativeName>
    <alternativeName>
        <fullName>SUMO1-protein E3 ligase Topors</fullName>
    </alternativeName>
    <alternativeName>
        <fullName>Topoisomerase I-binding RING finger protein</fullName>
    </alternativeName>
    <alternativeName>
        <fullName>Topoisomerase I-binding arginine/serine-rich protein</fullName>
    </alternativeName>
    <alternativeName>
        <fullName>Tumor suppressor p53-binding protein 3</fullName>
        <shortName>p53-binding protein 3</shortName>
        <shortName>p53BP3</shortName>
    </alternativeName>
</protein>
<organism>
    <name type="scientific">Homo sapiens</name>
    <name type="common">Human</name>
    <dbReference type="NCBI Taxonomy" id="9606"/>
    <lineage>
        <taxon>Eukaryota</taxon>
        <taxon>Metazoa</taxon>
        <taxon>Chordata</taxon>
        <taxon>Craniata</taxon>
        <taxon>Vertebrata</taxon>
        <taxon>Euteleostomi</taxon>
        <taxon>Mammalia</taxon>
        <taxon>Eutheria</taxon>
        <taxon>Euarchontoglires</taxon>
        <taxon>Primates</taxon>
        <taxon>Haplorrhini</taxon>
        <taxon>Catarrhini</taxon>
        <taxon>Hominidae</taxon>
        <taxon>Homo</taxon>
    </lineage>
</organism>
<accession>Q9NS56</accession>
<accession>O43273</accession>
<accession>Q6P987</accession>
<accession>Q9NS55</accession>
<accession>Q9UNR9</accession>
<evidence type="ECO:0000250" key="1">
    <source>
        <dbReference type="UniProtKB" id="Q80Z37"/>
    </source>
</evidence>
<evidence type="ECO:0000255" key="2">
    <source>
        <dbReference type="PROSITE-ProRule" id="PRU00175"/>
    </source>
</evidence>
<evidence type="ECO:0000256" key="3">
    <source>
        <dbReference type="SAM" id="MobiDB-lite"/>
    </source>
</evidence>
<evidence type="ECO:0000269" key="4">
    <source>
    </source>
</evidence>
<evidence type="ECO:0000269" key="5">
    <source>
    </source>
</evidence>
<evidence type="ECO:0000269" key="6">
    <source>
    </source>
</evidence>
<evidence type="ECO:0000269" key="7">
    <source>
    </source>
</evidence>
<evidence type="ECO:0000269" key="8">
    <source>
    </source>
</evidence>
<evidence type="ECO:0000269" key="9">
    <source>
    </source>
</evidence>
<evidence type="ECO:0000269" key="10">
    <source>
    </source>
</evidence>
<evidence type="ECO:0000269" key="11">
    <source>
    </source>
</evidence>
<evidence type="ECO:0000269" key="12">
    <source>
    </source>
</evidence>
<evidence type="ECO:0000269" key="13">
    <source>
    </source>
</evidence>
<evidence type="ECO:0000269" key="14">
    <source>
    </source>
</evidence>
<evidence type="ECO:0000269" key="15">
    <source>
    </source>
</evidence>
<evidence type="ECO:0000269" key="16">
    <source>
    </source>
</evidence>
<evidence type="ECO:0000269" key="17">
    <source>
    </source>
</evidence>
<evidence type="ECO:0000269" key="18">
    <source>
    </source>
</evidence>
<evidence type="ECO:0000303" key="19">
    <source>
    </source>
</evidence>
<evidence type="ECO:0000305" key="20"/>
<evidence type="ECO:0000305" key="21">
    <source>
    </source>
</evidence>
<evidence type="ECO:0007744" key="22">
    <source>
    </source>
</evidence>
<evidence type="ECO:0007744" key="23">
    <source>
    </source>
</evidence>
<evidence type="ECO:0007744" key="24">
    <source>
    </source>
</evidence>
<evidence type="ECO:0007744" key="25">
    <source>
    </source>
</evidence>
<evidence type="ECO:0007744" key="26">
    <source>
    </source>
</evidence>
<evidence type="ECO:0007744" key="27">
    <source>
    </source>
</evidence>
<evidence type="ECO:0007744" key="28">
    <source>
    </source>
</evidence>
<evidence type="ECO:0007744" key="29">
    <source>
    </source>
</evidence>
<evidence type="ECO:0007744" key="30">
    <source>
    </source>
</evidence>
<evidence type="ECO:0007744" key="31">
    <source>
    </source>
</evidence>
<keyword id="KW-0025">Alternative splicing</keyword>
<keyword id="KW-0227">DNA damage</keyword>
<keyword id="KW-1017">Isopeptide bond</keyword>
<keyword id="KW-0479">Metal-binding</keyword>
<keyword id="KW-0539">Nucleus</keyword>
<keyword id="KW-0597">Phosphoprotein</keyword>
<keyword id="KW-1267">Proteomics identification</keyword>
<keyword id="KW-1185">Reference proteome</keyword>
<keyword id="KW-0682">Retinitis pigmentosa</keyword>
<keyword id="KW-0808">Transferase</keyword>
<keyword id="KW-0832">Ubl conjugation</keyword>
<keyword id="KW-0833">Ubl conjugation pathway</keyword>
<keyword id="KW-0862">Zinc</keyword>
<keyword id="KW-0863">Zinc-finger</keyword>
<name>TOPRS_HUMAN</name>
<comment type="function">
    <text evidence="9 11 12 13 15 17 18">Functions as an E3 ubiquitin-protein ligase and as an E3 SUMO1-protein ligase. Probable tumor suppressor involved in cell growth, cell proliferation and apoptosis that regulates p53/TP53 stability through ubiquitin-dependent degradation. May regulate chromatin modification through sumoylation of several chromatin modification-associated proteins. May be involved in DNA damage-induced cell death through IKBKE sumoylation.</text>
</comment>
<comment type="catalytic activity">
    <reaction>
        <text>S-ubiquitinyl-[E2 ubiquitin-conjugating enzyme]-L-cysteine + [acceptor protein]-L-lysine = [E2 ubiquitin-conjugating enzyme]-L-cysteine + N(6)-ubiquitinyl-[acceptor protein]-L-lysine.</text>
        <dbReference type="EC" id="2.3.2.27"/>
    </reaction>
</comment>
<comment type="subunit">
    <text evidence="1 4 5 7 13 15 17 18">Interacts with PARK7/DJ-1 (By similarity). Interacts with TOP1. Interacts with p53/TP53; can both ubiquitinate and sumoylate p53/TP53. Interacts with the SUMO1 conjugating enzyme UBE2I. Interacts with SUMO1. Interacts with NKX3-1; polyubiquitinates NKX3-1 and induces its proteasomal degradation. Interacts with SIN3A; sumoylates SIN3A. Interacts with IKBKE; induced by DNA damage.</text>
</comment>
<comment type="interaction">
    <interactant intactId="EBI-1996473">
        <id>Q9NS56</id>
    </interactant>
    <interactant intactId="EBI-7387242">
        <id>P03132</id>
        <label>Rep68</label>
    </interactant>
    <organismsDiffer>true</organismsDiffer>
    <experiments>3</experiments>
</comment>
<comment type="subcellular location">
    <subcellularLocation>
        <location>Nucleus</location>
    </subcellularLocation>
    <subcellularLocation>
        <location>Nucleus</location>
        <location>PML body</location>
    </subcellularLocation>
    <text>Localizes to discrete nuclear foci which partly overlap with PML nuclear bodies. Targeted to PML nuclear bodies upon DNA damage.</text>
</comment>
<comment type="alternative products">
    <event type="alternative splicing"/>
    <isoform>
        <id>Q9NS56-1</id>
        <name>1</name>
        <name>LUN-1</name>
        <sequence type="displayed"/>
    </isoform>
    <isoform>
        <id>Q9NS56-2</id>
        <name>2</name>
        <name>LUN-2</name>
        <sequence type="described" ref="VSP_017916 VSP_017917"/>
    </isoform>
</comment>
<comment type="tissue specificity">
    <text evidence="5 6 8">Expressed at highest levels in testis and at lower levels in adrenal gland, bone marrow, brain, colon, heart, kidney, liver, muscle, ovary, pancreas, placenta, prostate, skeletal muscle, skin, small intestine, spleen, stomach, testis, thymus, thyroid and uterus. Expressed in the alveolar epithelium of the lung. Expression is commonly decreased in colon adenocarcinomas and lung cancers.</text>
</comment>
<comment type="induction">
    <text evidence="11">By genotoxic agents such as cisplatin and camptothecin.</text>
</comment>
<comment type="PTM">
    <text evidence="16 17">Phosphorylation at Ser-98 regulates the E3 ubiquitin-protein ligase activity but not the SUMO1-protein ligase activity. Phosphorylation at Ser-718 increases the E3 ubiquitin-protein ligase activity versus the SUMO1-protein ligase activity resulting in increased p53/TP53 ubiquitination and degradation.</text>
</comment>
<comment type="PTM">
    <text evidence="7 12">Sumoylated.</text>
</comment>
<comment type="disease" evidence="14">
    <disease id="DI-00991">
        <name>Retinitis pigmentosa 31</name>
        <acronym>RP31</acronym>
        <description>A retinal dystrophy belonging to the group of pigmentary retinopathies. Retinitis pigmentosa is characterized by retinal pigment deposits visible on fundus examination and primary loss of rod photoreceptor cells followed by secondary loss of cone photoreceptors. Patients typically have night vision blindness and loss of midperipheral visual field. As their condition progresses, they lose their far peripheral visual field and eventually central vision as well.</description>
        <dbReference type="MIM" id="609923"/>
    </disease>
    <text>The disease is caused by variants affecting the gene represented in this entry.</text>
</comment>
<comment type="caution">
    <text evidence="21">Was originally thought to bind to the palindromic consensus sequence 5'-TCCCAGCACTTTGGGA-3' and to regulate the transcription of numerous genes in the lung.</text>
</comment>
<comment type="sequence caution" evidence="20">
    <conflict type="erroneous initiation">
        <sequence resource="EMBL-CDS" id="AAC98530"/>
    </conflict>
</comment>
<comment type="online information" name="Atlas of Genetics and Cytogenetics in Oncology and Haematology">
    <link uri="https://atlasgeneticsoncology.org/gene/42663/TOPORS"/>
</comment>